<proteinExistence type="inferred from homology"/>
<keyword id="KW-0687">Ribonucleoprotein</keyword>
<keyword id="KW-0689">Ribosomal protein</keyword>
<keyword id="KW-0694">RNA-binding</keyword>
<keyword id="KW-0699">rRNA-binding</keyword>
<feature type="chain" id="PRO_1000142770" description="Large ribosomal subunit protein uL15">
    <location>
        <begin position="1"/>
        <end position="146"/>
    </location>
</feature>
<feature type="region of interest" description="Disordered" evidence="2">
    <location>
        <begin position="1"/>
        <end position="51"/>
    </location>
</feature>
<feature type="compositionally biased region" description="Gly residues" evidence="2">
    <location>
        <begin position="21"/>
        <end position="31"/>
    </location>
</feature>
<feature type="compositionally biased region" description="Gly residues" evidence="2">
    <location>
        <begin position="42"/>
        <end position="51"/>
    </location>
</feature>
<gene>
    <name evidence="1" type="primary">rplO</name>
    <name type="ordered locus">Aflv_0124</name>
</gene>
<evidence type="ECO:0000255" key="1">
    <source>
        <dbReference type="HAMAP-Rule" id="MF_01341"/>
    </source>
</evidence>
<evidence type="ECO:0000256" key="2">
    <source>
        <dbReference type="SAM" id="MobiDB-lite"/>
    </source>
</evidence>
<evidence type="ECO:0000305" key="3"/>
<name>RL15_ANOFW</name>
<accession>B7GJ86</accession>
<protein>
    <recommendedName>
        <fullName evidence="1">Large ribosomal subunit protein uL15</fullName>
    </recommendedName>
    <alternativeName>
        <fullName evidence="3">50S ribosomal protein L15</fullName>
    </alternativeName>
</protein>
<sequence>MKLHELQPAPGSRKERNRVGRGIGSGNGKTSGKGHKGQNARSGGGVRIGFEGGQTPLFRRLPKRGFTNIHRKEYAIVNLEALNRFEDGTEVTPELLLETGVVSKLKAGIKVLGDGELTKKLTVKAHKFSASAKEAIEAAGGTTEVI</sequence>
<reference key="1">
    <citation type="journal article" date="2008" name="Genome Biol.">
        <title>Encapsulated in silica: genome, proteome and physiology of the thermophilic bacterium Anoxybacillus flavithermus WK1.</title>
        <authorList>
            <person name="Saw J.H."/>
            <person name="Mountain B.W."/>
            <person name="Feng L."/>
            <person name="Omelchenko M.V."/>
            <person name="Hou S."/>
            <person name="Saito J.A."/>
            <person name="Stott M.B."/>
            <person name="Li D."/>
            <person name="Zhao G."/>
            <person name="Wu J."/>
            <person name="Galperin M.Y."/>
            <person name="Koonin E.V."/>
            <person name="Makarova K.S."/>
            <person name="Wolf Y.I."/>
            <person name="Rigden D.J."/>
            <person name="Dunfield P.F."/>
            <person name="Wang L."/>
            <person name="Alam M."/>
        </authorList>
    </citation>
    <scope>NUCLEOTIDE SEQUENCE [LARGE SCALE GENOMIC DNA]</scope>
    <source>
        <strain>DSM 21510 / WK1</strain>
    </source>
</reference>
<organism>
    <name type="scientific">Anoxybacillus flavithermus (strain DSM 21510 / WK1)</name>
    <dbReference type="NCBI Taxonomy" id="491915"/>
    <lineage>
        <taxon>Bacteria</taxon>
        <taxon>Bacillati</taxon>
        <taxon>Bacillota</taxon>
        <taxon>Bacilli</taxon>
        <taxon>Bacillales</taxon>
        <taxon>Anoxybacillaceae</taxon>
        <taxon>Anoxybacillus</taxon>
    </lineage>
</organism>
<dbReference type="EMBL" id="CP000922">
    <property type="protein sequence ID" value="ACJ32508.1"/>
    <property type="molecule type" value="Genomic_DNA"/>
</dbReference>
<dbReference type="RefSeq" id="WP_006322638.1">
    <property type="nucleotide sequence ID" value="NC_011567.1"/>
</dbReference>
<dbReference type="SMR" id="B7GJ86"/>
<dbReference type="STRING" id="491915.Aflv_0124"/>
<dbReference type="GeneID" id="7036323"/>
<dbReference type="KEGG" id="afl:Aflv_0124"/>
<dbReference type="eggNOG" id="COG0200">
    <property type="taxonomic scope" value="Bacteria"/>
</dbReference>
<dbReference type="HOGENOM" id="CLU_055188_4_2_9"/>
<dbReference type="Proteomes" id="UP000000742">
    <property type="component" value="Chromosome"/>
</dbReference>
<dbReference type="GO" id="GO:0022625">
    <property type="term" value="C:cytosolic large ribosomal subunit"/>
    <property type="evidence" value="ECO:0007669"/>
    <property type="project" value="TreeGrafter"/>
</dbReference>
<dbReference type="GO" id="GO:0019843">
    <property type="term" value="F:rRNA binding"/>
    <property type="evidence" value="ECO:0007669"/>
    <property type="project" value="UniProtKB-UniRule"/>
</dbReference>
<dbReference type="GO" id="GO:0003735">
    <property type="term" value="F:structural constituent of ribosome"/>
    <property type="evidence" value="ECO:0007669"/>
    <property type="project" value="InterPro"/>
</dbReference>
<dbReference type="GO" id="GO:0006412">
    <property type="term" value="P:translation"/>
    <property type="evidence" value="ECO:0007669"/>
    <property type="project" value="UniProtKB-UniRule"/>
</dbReference>
<dbReference type="FunFam" id="3.100.10.10:FF:000004">
    <property type="entry name" value="50S ribosomal protein L15"/>
    <property type="match status" value="1"/>
</dbReference>
<dbReference type="Gene3D" id="3.100.10.10">
    <property type="match status" value="1"/>
</dbReference>
<dbReference type="HAMAP" id="MF_01341">
    <property type="entry name" value="Ribosomal_uL15"/>
    <property type="match status" value="1"/>
</dbReference>
<dbReference type="InterPro" id="IPR030878">
    <property type="entry name" value="Ribosomal_uL15"/>
</dbReference>
<dbReference type="InterPro" id="IPR021131">
    <property type="entry name" value="Ribosomal_uL15/eL18"/>
</dbReference>
<dbReference type="InterPro" id="IPR036227">
    <property type="entry name" value="Ribosomal_uL15/eL18_sf"/>
</dbReference>
<dbReference type="InterPro" id="IPR005749">
    <property type="entry name" value="Ribosomal_uL15_bac-type"/>
</dbReference>
<dbReference type="InterPro" id="IPR001196">
    <property type="entry name" value="Ribosomal_uL15_CS"/>
</dbReference>
<dbReference type="NCBIfam" id="TIGR01071">
    <property type="entry name" value="rplO_bact"/>
    <property type="match status" value="1"/>
</dbReference>
<dbReference type="PANTHER" id="PTHR12934">
    <property type="entry name" value="50S RIBOSOMAL PROTEIN L15"/>
    <property type="match status" value="1"/>
</dbReference>
<dbReference type="PANTHER" id="PTHR12934:SF11">
    <property type="entry name" value="LARGE RIBOSOMAL SUBUNIT PROTEIN UL15M"/>
    <property type="match status" value="1"/>
</dbReference>
<dbReference type="Pfam" id="PF00828">
    <property type="entry name" value="Ribosomal_L27A"/>
    <property type="match status" value="1"/>
</dbReference>
<dbReference type="SUPFAM" id="SSF52080">
    <property type="entry name" value="Ribosomal proteins L15p and L18e"/>
    <property type="match status" value="1"/>
</dbReference>
<dbReference type="PROSITE" id="PS00475">
    <property type="entry name" value="RIBOSOMAL_L15"/>
    <property type="match status" value="1"/>
</dbReference>
<comment type="function">
    <text evidence="1">Binds to the 23S rRNA.</text>
</comment>
<comment type="subunit">
    <text evidence="1">Part of the 50S ribosomal subunit.</text>
</comment>
<comment type="similarity">
    <text evidence="1">Belongs to the universal ribosomal protein uL15 family.</text>
</comment>